<gene>
    <name type="primary">BTS1</name>
    <name type="ordered locus">AEL238C</name>
</gene>
<dbReference type="EC" id="2.5.1.-"/>
<dbReference type="EC" id="2.5.1.1"/>
<dbReference type="EC" id="2.5.1.29"/>
<dbReference type="EC" id="2.5.1.10"/>
<dbReference type="EMBL" id="AE016818">
    <property type="protein sequence ID" value="AAS52447.1"/>
    <property type="molecule type" value="Genomic_DNA"/>
</dbReference>
<dbReference type="RefSeq" id="NP_984623.1">
    <property type="nucleotide sequence ID" value="NM_209976.1"/>
</dbReference>
<dbReference type="SMR" id="Q758K0"/>
<dbReference type="FunCoup" id="Q758K0">
    <property type="interactions" value="483"/>
</dbReference>
<dbReference type="STRING" id="284811.Q758K0"/>
<dbReference type="EnsemblFungi" id="AAS52447">
    <property type="protein sequence ID" value="AAS52447"/>
    <property type="gene ID" value="AGOS_AEL238C"/>
</dbReference>
<dbReference type="GeneID" id="4620805"/>
<dbReference type="KEGG" id="ago:AGOS_AEL238C"/>
<dbReference type="eggNOG" id="KOG0777">
    <property type="taxonomic scope" value="Eukaryota"/>
</dbReference>
<dbReference type="HOGENOM" id="CLU_014015_6_0_1"/>
<dbReference type="InParanoid" id="Q758K0"/>
<dbReference type="OMA" id="ANFAYFW"/>
<dbReference type="OrthoDB" id="6921389at2759"/>
<dbReference type="UniPathway" id="UPA00259">
    <property type="reaction ID" value="UER00368"/>
</dbReference>
<dbReference type="UniPathway" id="UPA00260">
    <property type="reaction ID" value="UER00369"/>
</dbReference>
<dbReference type="UniPathway" id="UPA00389">
    <property type="reaction ID" value="UER00564"/>
</dbReference>
<dbReference type="Proteomes" id="UP000000591">
    <property type="component" value="Chromosome V"/>
</dbReference>
<dbReference type="GO" id="GO:0005737">
    <property type="term" value="C:cytoplasm"/>
    <property type="evidence" value="ECO:0007669"/>
    <property type="project" value="UniProtKB-SubCell"/>
</dbReference>
<dbReference type="GO" id="GO:0004337">
    <property type="term" value="F:(2E,6E)-farnesyl diphosphate synthase activity"/>
    <property type="evidence" value="ECO:0007669"/>
    <property type="project" value="UniProtKB-EC"/>
</dbReference>
<dbReference type="GO" id="GO:0004161">
    <property type="term" value="F:dimethylallyltranstransferase activity"/>
    <property type="evidence" value="ECO:0007669"/>
    <property type="project" value="UniProtKB-EC"/>
</dbReference>
<dbReference type="GO" id="GO:0004311">
    <property type="term" value="F:geranylgeranyl diphosphate synthase activity"/>
    <property type="evidence" value="ECO:0000318"/>
    <property type="project" value="GO_Central"/>
</dbReference>
<dbReference type="GO" id="GO:0046872">
    <property type="term" value="F:metal ion binding"/>
    <property type="evidence" value="ECO:0007669"/>
    <property type="project" value="UniProtKB-KW"/>
</dbReference>
<dbReference type="GO" id="GO:0016117">
    <property type="term" value="P:carotenoid biosynthetic process"/>
    <property type="evidence" value="ECO:0007669"/>
    <property type="project" value="UniProtKB-KW"/>
</dbReference>
<dbReference type="GO" id="GO:0045337">
    <property type="term" value="P:farnesyl diphosphate biosynthetic process"/>
    <property type="evidence" value="ECO:0007669"/>
    <property type="project" value="UniProtKB-UniPathway"/>
</dbReference>
<dbReference type="GO" id="GO:0033384">
    <property type="term" value="P:geranyl diphosphate biosynthetic process"/>
    <property type="evidence" value="ECO:0007669"/>
    <property type="project" value="UniProtKB-UniPathway"/>
</dbReference>
<dbReference type="GO" id="GO:0033386">
    <property type="term" value="P:geranylgeranyl diphosphate biosynthetic process"/>
    <property type="evidence" value="ECO:0007669"/>
    <property type="project" value="UniProtKB-UniPathway"/>
</dbReference>
<dbReference type="GO" id="GO:0008299">
    <property type="term" value="P:isoprenoid biosynthetic process"/>
    <property type="evidence" value="ECO:0000318"/>
    <property type="project" value="GO_Central"/>
</dbReference>
<dbReference type="GO" id="GO:0015031">
    <property type="term" value="P:protein transport"/>
    <property type="evidence" value="ECO:0007669"/>
    <property type="project" value="UniProtKB-KW"/>
</dbReference>
<dbReference type="CDD" id="cd00685">
    <property type="entry name" value="Trans_IPPS_HT"/>
    <property type="match status" value="1"/>
</dbReference>
<dbReference type="Gene3D" id="1.10.600.10">
    <property type="entry name" value="Farnesyl Diphosphate Synthase"/>
    <property type="match status" value="1"/>
</dbReference>
<dbReference type="InterPro" id="IPR008949">
    <property type="entry name" value="Isoprenoid_synthase_dom_sf"/>
</dbReference>
<dbReference type="InterPro" id="IPR000092">
    <property type="entry name" value="Polyprenyl_synt"/>
</dbReference>
<dbReference type="InterPro" id="IPR033749">
    <property type="entry name" value="Polyprenyl_synt_CS"/>
</dbReference>
<dbReference type="PANTHER" id="PTHR12001">
    <property type="entry name" value="GERANYLGERANYL PYROPHOSPHATE SYNTHASE"/>
    <property type="match status" value="1"/>
</dbReference>
<dbReference type="PANTHER" id="PTHR12001:SF44">
    <property type="entry name" value="GERANYLGERANYL PYROPHOSPHATE SYNTHASE"/>
    <property type="match status" value="1"/>
</dbReference>
<dbReference type="Pfam" id="PF00348">
    <property type="entry name" value="polyprenyl_synt"/>
    <property type="match status" value="1"/>
</dbReference>
<dbReference type="SFLD" id="SFLDS00005">
    <property type="entry name" value="Isoprenoid_Synthase_Type_I"/>
    <property type="match status" value="1"/>
</dbReference>
<dbReference type="SFLD" id="SFLDG01017">
    <property type="entry name" value="Polyprenyl_Transferase_Like"/>
    <property type="match status" value="1"/>
</dbReference>
<dbReference type="SUPFAM" id="SSF48576">
    <property type="entry name" value="Terpenoid synthases"/>
    <property type="match status" value="1"/>
</dbReference>
<dbReference type="PROSITE" id="PS00723">
    <property type="entry name" value="POLYPRENYL_SYNTHASE_1"/>
    <property type="match status" value="1"/>
</dbReference>
<dbReference type="PROSITE" id="PS00444">
    <property type="entry name" value="POLYPRENYL_SYNTHASE_2"/>
    <property type="match status" value="1"/>
</dbReference>
<name>GGPPS_EREGS</name>
<reference key="1">
    <citation type="journal article" date="2004" name="Science">
        <title>The Ashbya gossypii genome as a tool for mapping the ancient Saccharomyces cerevisiae genome.</title>
        <authorList>
            <person name="Dietrich F.S."/>
            <person name="Voegeli S."/>
            <person name="Brachat S."/>
            <person name="Lerch A."/>
            <person name="Gates K."/>
            <person name="Steiner S."/>
            <person name="Mohr C."/>
            <person name="Poehlmann R."/>
            <person name="Luedi P."/>
            <person name="Choi S."/>
            <person name="Wing R.A."/>
            <person name="Flavier A."/>
            <person name="Gaffney T.D."/>
            <person name="Philippsen P."/>
        </authorList>
    </citation>
    <scope>NUCLEOTIDE SEQUENCE [LARGE SCALE GENOMIC DNA]</scope>
    <source>
        <strain>ATCC 10895 / CBS 109.51 / FGSC 9923 / NRRL Y-1056</strain>
    </source>
</reference>
<reference key="2">
    <citation type="journal article" date="2013" name="G3 (Bethesda)">
        <title>Genomes of Ashbya fungi isolated from insects reveal four mating-type loci, numerous translocations, lack of transposons, and distinct gene duplications.</title>
        <authorList>
            <person name="Dietrich F.S."/>
            <person name="Voegeli S."/>
            <person name="Kuo S."/>
            <person name="Philippsen P."/>
        </authorList>
    </citation>
    <scope>GENOME REANNOTATION</scope>
    <source>
        <strain>ATCC 10895 / CBS 109.51 / FGSC 9923 / NRRL Y-1056</strain>
    </source>
</reference>
<proteinExistence type="inferred from homology"/>
<protein>
    <recommendedName>
        <fullName>Geranylgeranyl pyrophosphate synthase</fullName>
        <shortName>GGPP synthase</shortName>
        <shortName>GGPPSase</shortName>
        <ecNumber>2.5.1.-</ecNumber>
    </recommendedName>
    <alternativeName>
        <fullName>(2E,6E)-farnesyl diphosphate synthase</fullName>
    </alternativeName>
    <alternativeName>
        <fullName>Dimethylallyltranstransferase</fullName>
        <ecNumber>2.5.1.1</ecNumber>
    </alternativeName>
    <alternativeName>
        <fullName>Farnesyl diphosphate synthase</fullName>
    </alternativeName>
    <alternativeName>
        <fullName>Farnesyltranstransferase</fullName>
        <ecNumber>2.5.1.29</ecNumber>
    </alternativeName>
    <alternativeName>
        <fullName>Geranylgeranyl diphosphate synthase</fullName>
    </alternativeName>
    <alternativeName>
        <fullName>Geranyltranstransferase</fullName>
        <ecNumber>2.5.1.10</ecNumber>
    </alternativeName>
</protein>
<evidence type="ECO:0000250" key="1"/>
<evidence type="ECO:0000250" key="2">
    <source>
        <dbReference type="UniProtKB" id="P14324"/>
    </source>
</evidence>
<evidence type="ECO:0000250" key="3">
    <source>
        <dbReference type="UniProtKB" id="Q12051"/>
    </source>
</evidence>
<evidence type="ECO:0000305" key="4"/>
<comment type="function">
    <text evidence="1">Catalyzes the trans-addition of the 3 molecules of IPP onto DMAPP to form geranylgeranyl pyrophosphate. May be involved in vesicle trafficking and protein sorting (By similarity).</text>
</comment>
<comment type="catalytic activity">
    <reaction>
        <text>isopentenyl diphosphate + dimethylallyl diphosphate = (2E)-geranyl diphosphate + diphosphate</text>
        <dbReference type="Rhea" id="RHEA:22408"/>
        <dbReference type="ChEBI" id="CHEBI:33019"/>
        <dbReference type="ChEBI" id="CHEBI:57623"/>
        <dbReference type="ChEBI" id="CHEBI:58057"/>
        <dbReference type="ChEBI" id="CHEBI:128769"/>
        <dbReference type="EC" id="2.5.1.1"/>
    </reaction>
</comment>
<comment type="catalytic activity">
    <reaction>
        <text>isopentenyl diphosphate + (2E)-geranyl diphosphate = (2E,6E)-farnesyl diphosphate + diphosphate</text>
        <dbReference type="Rhea" id="RHEA:19361"/>
        <dbReference type="ChEBI" id="CHEBI:33019"/>
        <dbReference type="ChEBI" id="CHEBI:58057"/>
        <dbReference type="ChEBI" id="CHEBI:128769"/>
        <dbReference type="ChEBI" id="CHEBI:175763"/>
        <dbReference type="EC" id="2.5.1.10"/>
    </reaction>
</comment>
<comment type="catalytic activity">
    <reaction>
        <text>isopentenyl diphosphate + (2E,6E)-farnesyl diphosphate = (2E,6E,10E)-geranylgeranyl diphosphate + diphosphate</text>
        <dbReference type="Rhea" id="RHEA:17653"/>
        <dbReference type="ChEBI" id="CHEBI:33019"/>
        <dbReference type="ChEBI" id="CHEBI:58756"/>
        <dbReference type="ChEBI" id="CHEBI:128769"/>
        <dbReference type="ChEBI" id="CHEBI:175763"/>
        <dbReference type="EC" id="2.5.1.29"/>
    </reaction>
</comment>
<comment type="cofactor">
    <cofactor evidence="1">
        <name>Mg(2+)</name>
        <dbReference type="ChEBI" id="CHEBI:18420"/>
    </cofactor>
    <text evidence="1">Binds 2 Mg(2+) ions per subunit.</text>
</comment>
<comment type="pathway">
    <text>Isoprenoid biosynthesis; farnesyl diphosphate biosynthesis; farnesyl diphosphate from geranyl diphosphate and isopentenyl diphosphate: step 1/1.</text>
</comment>
<comment type="pathway">
    <text>Isoprenoid biosynthesis; geranyl diphosphate biosynthesis; geranyl diphosphate from dimethylallyl diphosphate and isopentenyl diphosphate: step 1/1.</text>
</comment>
<comment type="pathway">
    <text>Isoprenoid biosynthesis; geranylgeranyl diphosphate biosynthesis; geranylgeranyl diphosphate from farnesyl diphosphate and isopentenyl diphosphate: step 1/1.</text>
</comment>
<comment type="subcellular location">
    <subcellularLocation>
        <location evidence="1">Cytoplasm</location>
    </subcellularLocation>
</comment>
<comment type="similarity">
    <text evidence="4">Belongs to the FPP/GGPP synthase family.</text>
</comment>
<accession>Q758K0</accession>
<feature type="chain" id="PRO_0000228138" description="Geranylgeranyl pyrophosphate synthase">
    <location>
        <begin position="1"/>
        <end position="320"/>
    </location>
</feature>
<feature type="binding site" evidence="2">
    <location>
        <position position="35"/>
    </location>
    <ligand>
        <name>isopentenyl diphosphate</name>
        <dbReference type="ChEBI" id="CHEBI:128769"/>
    </ligand>
</feature>
<feature type="binding site" evidence="2">
    <location>
        <position position="38"/>
    </location>
    <ligand>
        <name>isopentenyl diphosphate</name>
        <dbReference type="ChEBI" id="CHEBI:128769"/>
    </ligand>
</feature>
<feature type="binding site" evidence="3">
    <location>
        <position position="67"/>
    </location>
    <ligand>
        <name>isopentenyl diphosphate</name>
        <dbReference type="ChEBI" id="CHEBI:128769"/>
    </ligand>
</feature>
<feature type="binding site" evidence="2">
    <location>
        <position position="74"/>
    </location>
    <ligand>
        <name>Mg(2+)</name>
        <dbReference type="ChEBI" id="CHEBI:18420"/>
        <label>1</label>
    </ligand>
</feature>
<feature type="binding site" evidence="2">
    <location>
        <position position="74"/>
    </location>
    <ligand>
        <name>Mg(2+)</name>
        <dbReference type="ChEBI" id="CHEBI:18420"/>
        <label>2</label>
    </ligand>
</feature>
<feature type="binding site" evidence="2">
    <location>
        <position position="78"/>
    </location>
    <ligand>
        <name>Mg(2+)</name>
        <dbReference type="ChEBI" id="CHEBI:18420"/>
        <label>1</label>
    </ligand>
</feature>
<feature type="binding site" evidence="2">
    <location>
        <position position="78"/>
    </location>
    <ligand>
        <name>Mg(2+)</name>
        <dbReference type="ChEBI" id="CHEBI:18420"/>
        <label>2</label>
    </ligand>
</feature>
<feature type="binding site" evidence="1">
    <location>
        <position position="83"/>
    </location>
    <ligand>
        <name>dimethylallyl diphosphate</name>
        <dbReference type="ChEBI" id="CHEBI:57623"/>
    </ligand>
</feature>
<feature type="binding site" evidence="2">
    <location>
        <position position="84"/>
    </location>
    <ligand>
        <name>isopentenyl diphosphate</name>
        <dbReference type="ChEBI" id="CHEBI:128769"/>
    </ligand>
</feature>
<feature type="binding site" evidence="1">
    <location>
        <position position="168"/>
    </location>
    <ligand>
        <name>dimethylallyl diphosphate</name>
        <dbReference type="ChEBI" id="CHEBI:57623"/>
    </ligand>
</feature>
<feature type="binding site" evidence="1">
    <location>
        <position position="169"/>
    </location>
    <ligand>
        <name>dimethylallyl diphosphate</name>
        <dbReference type="ChEBI" id="CHEBI:57623"/>
    </ligand>
</feature>
<feature type="binding site" evidence="1">
    <location>
        <position position="206"/>
    </location>
    <ligand>
        <name>dimethylallyl diphosphate</name>
        <dbReference type="ChEBI" id="CHEBI:57623"/>
    </ligand>
</feature>
<feature type="binding site" evidence="1">
    <location>
        <position position="223"/>
    </location>
    <ligand>
        <name>dimethylallyl diphosphate</name>
        <dbReference type="ChEBI" id="CHEBI:57623"/>
    </ligand>
</feature>
<feature type="binding site" evidence="1">
    <location>
        <position position="233"/>
    </location>
    <ligand>
        <name>dimethylallyl diphosphate</name>
        <dbReference type="ChEBI" id="CHEBI:57623"/>
    </ligand>
</feature>
<sequence>MDSVEGLALGPVIWTASQEELLRQPYNHLVTQPGKNFRNTLIRVFNGFYGLSERQVAAVTELVEMLHVASLLIDDIEDNSAWRRGVAAAHVVYGSPMTINTANYMYFVSMSLLGQLAAQRPAGPLQDLLKVFNEEMMNLHRGQGLDIYWRDTFTVPSEHDYLRMVMHKTGGLFRLTVRIMEALREGPDGPGSTLVPLSNLLGVLYQVRDDYLNLTDSRMSENKGFADDITEGKFSYPIIHGLQYARVHDPAGYDFLVSVLRQRTTDITTKRRVVRYLADVSGSLAYTKQRIIELATLIKTKYIPASGTELCNVIDSLTSF</sequence>
<keyword id="KW-0125">Carotenoid biosynthesis</keyword>
<keyword id="KW-0963">Cytoplasm</keyword>
<keyword id="KW-0414">Isoprene biosynthesis</keyword>
<keyword id="KW-0460">Magnesium</keyword>
<keyword id="KW-0479">Metal-binding</keyword>
<keyword id="KW-0653">Protein transport</keyword>
<keyword id="KW-1185">Reference proteome</keyword>
<keyword id="KW-0808">Transferase</keyword>
<keyword id="KW-0813">Transport</keyword>
<organism>
    <name type="scientific">Eremothecium gossypii (strain ATCC 10895 / CBS 109.51 / FGSC 9923 / NRRL Y-1056)</name>
    <name type="common">Yeast</name>
    <name type="synonym">Ashbya gossypii</name>
    <dbReference type="NCBI Taxonomy" id="284811"/>
    <lineage>
        <taxon>Eukaryota</taxon>
        <taxon>Fungi</taxon>
        <taxon>Dikarya</taxon>
        <taxon>Ascomycota</taxon>
        <taxon>Saccharomycotina</taxon>
        <taxon>Saccharomycetes</taxon>
        <taxon>Saccharomycetales</taxon>
        <taxon>Saccharomycetaceae</taxon>
        <taxon>Eremothecium</taxon>
    </lineage>
</organism>